<keyword id="KW-1003">Cell membrane</keyword>
<keyword id="KW-0297">G-protein coupled receptor</keyword>
<keyword id="KW-0325">Glycoprotein</keyword>
<keyword id="KW-0449">Lipoprotein</keyword>
<keyword id="KW-0472">Membrane</keyword>
<keyword id="KW-0564">Palmitate</keyword>
<keyword id="KW-0675">Receptor</keyword>
<keyword id="KW-0807">Transducer</keyword>
<keyword id="KW-0812">Transmembrane</keyword>
<keyword id="KW-1133">Transmembrane helix</keyword>
<organism>
    <name type="scientific">Panthera onca</name>
    <name type="common">Jaguar</name>
    <name type="synonym">Felis onca</name>
    <dbReference type="NCBI Taxonomy" id="9690"/>
    <lineage>
        <taxon>Eukaryota</taxon>
        <taxon>Metazoa</taxon>
        <taxon>Chordata</taxon>
        <taxon>Craniata</taxon>
        <taxon>Vertebrata</taxon>
        <taxon>Euteleostomi</taxon>
        <taxon>Mammalia</taxon>
        <taxon>Eutheria</taxon>
        <taxon>Laurasiatheria</taxon>
        <taxon>Carnivora</taxon>
        <taxon>Feliformia</taxon>
        <taxon>Felidae</taxon>
        <taxon>Pantherinae</taxon>
        <taxon>Panthera</taxon>
    </lineage>
</organism>
<accession>Q865E8</accession>
<accession>Q865E7</accession>
<gene>
    <name type="primary">MC1R</name>
</gene>
<comment type="function">
    <text evidence="1">Receptor for MSH (alpha, beta and gamma) and ACTH (By similarity). The activity of this receptor is mediated by G proteins which activate adenylate cyclase (By similarity). Mediates melanogenesis, the production of eumelanin (black/brown) and phaeomelanin (red/yellow), via regulation of cAMP signaling in melanocytes (By similarity).</text>
</comment>
<comment type="subunit">
    <text evidence="1">Interacts with MGRN1, but does not undergo MGRN1-mediated ubiquitination; this interaction competes with GNAS-binding and thus inhibits agonist-induced cAMP production. Interacts with OPN3; the interaction results in a decrease in MC1R-mediated cAMP signaling and ultimately a decrease in melanin production in melanocytes.</text>
</comment>
<comment type="subcellular location">
    <subcellularLocation>
        <location evidence="1">Cell membrane</location>
        <topology evidence="2">Multi-pass membrane protein</topology>
    </subcellularLocation>
</comment>
<comment type="polymorphism">
    <text evidence="4">The allele MC1R-delta-15 is associated with melanistic coat coloration.</text>
</comment>
<comment type="similarity">
    <text evidence="3">Belongs to the G-protein coupled receptor 1 family.</text>
</comment>
<feature type="chain" id="PRO_0000069836" description="Melanocyte-stimulating hormone receptor">
    <location>
        <begin position="1"/>
        <end position="317"/>
    </location>
</feature>
<feature type="topological domain" description="Extracellular" evidence="2">
    <location>
        <begin position="1"/>
        <end position="37"/>
    </location>
</feature>
<feature type="transmembrane region" description="Helical; Name=1" evidence="2">
    <location>
        <begin position="38"/>
        <end position="63"/>
    </location>
</feature>
<feature type="topological domain" description="Cytoplasmic" evidence="2">
    <location>
        <begin position="64"/>
        <end position="72"/>
    </location>
</feature>
<feature type="transmembrane region" description="Helical; Name=2" evidence="2">
    <location>
        <begin position="73"/>
        <end position="93"/>
    </location>
</feature>
<feature type="topological domain" description="Extracellular" evidence="2">
    <location>
        <begin position="94"/>
        <end position="118"/>
    </location>
</feature>
<feature type="transmembrane region" description="Helical; Name=3" evidence="2">
    <location>
        <begin position="119"/>
        <end position="140"/>
    </location>
</feature>
<feature type="topological domain" description="Cytoplasmic" evidence="2">
    <location>
        <begin position="141"/>
        <end position="163"/>
    </location>
</feature>
<feature type="transmembrane region" description="Helical; Name=4" evidence="2">
    <location>
        <begin position="164"/>
        <end position="183"/>
    </location>
</feature>
<feature type="topological domain" description="Extracellular" evidence="2">
    <location>
        <begin position="184"/>
        <end position="191"/>
    </location>
</feature>
<feature type="transmembrane region" description="Helical; Name=5" evidence="2">
    <location>
        <begin position="192"/>
        <end position="211"/>
    </location>
</feature>
<feature type="topological domain" description="Cytoplasmic" evidence="2">
    <location>
        <begin position="212"/>
        <end position="240"/>
    </location>
</feature>
<feature type="transmembrane region" description="Helical; Name=6" evidence="2">
    <location>
        <begin position="241"/>
        <end position="266"/>
    </location>
</feature>
<feature type="topological domain" description="Extracellular" evidence="2">
    <location>
        <begin position="267"/>
        <end position="279"/>
    </location>
</feature>
<feature type="transmembrane region" description="Helical; Name=7" evidence="2">
    <location>
        <begin position="280"/>
        <end position="300"/>
    </location>
</feature>
<feature type="topological domain" description="Cytoplasmic" evidence="2">
    <location>
        <begin position="301"/>
        <end position="317"/>
    </location>
</feature>
<feature type="lipid moiety-binding region" description="S-palmitoyl cysteine" evidence="2">
    <location>
        <position position="315"/>
    </location>
</feature>
<feature type="glycosylation site" description="N-linked (GlcNAc...) asparagine" evidence="2">
    <location>
        <position position="15"/>
    </location>
</feature>
<feature type="glycosylation site" description="N-linked (GlcNAc...) asparagine" evidence="2">
    <location>
        <position position="29"/>
    </location>
</feature>
<feature type="sequence variant" description="In allele MC1R-delta-15." evidence="4">
    <original>LEAGTL</original>
    <variation>T</variation>
    <location>
        <begin position="101"/>
        <end position="106"/>
    </location>
</feature>
<proteinExistence type="inferred from homology"/>
<name>MSHR_PANON</name>
<reference key="1">
    <citation type="journal article" date="2003" name="Curr. Biol.">
        <title>Molecular genetics and evolution of melanism in the cat family.</title>
        <authorList>
            <person name="Eizirik E."/>
            <person name="Yuhki N."/>
            <person name="Johnson W.E."/>
            <person name="Menotti-Raymond M."/>
            <person name="Hannah S.S."/>
            <person name="O'Brien S.J."/>
        </authorList>
    </citation>
    <scope>NUCLEOTIDE SEQUENCE [GENOMIC DNA]</scope>
    <scope>VARIANT 101-LEU--LEU-106 DELINS THR</scope>
    <source>
        <strain>Isolate Pon72</strain>
    </source>
</reference>
<dbReference type="EMBL" id="AY237396">
    <property type="protein sequence ID" value="AAO62413.1"/>
    <property type="molecule type" value="Genomic_DNA"/>
</dbReference>
<dbReference type="EMBL" id="AY237397">
    <property type="protein sequence ID" value="AAO62414.1"/>
    <property type="molecule type" value="Genomic_DNA"/>
</dbReference>
<dbReference type="SMR" id="Q865E8"/>
<dbReference type="GlyCosmos" id="Q865E8">
    <property type="glycosylation" value="2 sites, No reported glycans"/>
</dbReference>
<dbReference type="GO" id="GO:0005886">
    <property type="term" value="C:plasma membrane"/>
    <property type="evidence" value="ECO:0000250"/>
    <property type="project" value="UniProtKB"/>
</dbReference>
<dbReference type="GO" id="GO:0004980">
    <property type="term" value="F:melanocyte-stimulating hormone receptor activity"/>
    <property type="evidence" value="ECO:0007669"/>
    <property type="project" value="InterPro"/>
</dbReference>
<dbReference type="CDD" id="cd15351">
    <property type="entry name" value="7tmA_MC1R"/>
    <property type="match status" value="1"/>
</dbReference>
<dbReference type="FunFam" id="1.20.1070.10:FF:000211">
    <property type="entry name" value="Melanocyte-stimulating hormone receptor"/>
    <property type="match status" value="1"/>
</dbReference>
<dbReference type="Gene3D" id="1.20.1070.10">
    <property type="entry name" value="Rhodopsin 7-helix transmembrane proteins"/>
    <property type="match status" value="1"/>
</dbReference>
<dbReference type="InterPro" id="IPR000276">
    <property type="entry name" value="GPCR_Rhodpsn"/>
</dbReference>
<dbReference type="InterPro" id="IPR017452">
    <property type="entry name" value="GPCR_Rhodpsn_7TM"/>
</dbReference>
<dbReference type="InterPro" id="IPR001671">
    <property type="entry name" value="Melcrt_ACTH_rcpt"/>
</dbReference>
<dbReference type="InterPro" id="IPR000761">
    <property type="entry name" value="MSH_rcpt"/>
</dbReference>
<dbReference type="PANTHER" id="PTHR22750">
    <property type="entry name" value="G-PROTEIN COUPLED RECEPTOR"/>
    <property type="match status" value="1"/>
</dbReference>
<dbReference type="Pfam" id="PF00001">
    <property type="entry name" value="7tm_1"/>
    <property type="match status" value="2"/>
</dbReference>
<dbReference type="PRINTS" id="PR00237">
    <property type="entry name" value="GPCRRHODOPSN"/>
</dbReference>
<dbReference type="PRINTS" id="PR00534">
    <property type="entry name" value="MCRFAMILY"/>
</dbReference>
<dbReference type="PRINTS" id="PR00536">
    <property type="entry name" value="MELNOCYTESHR"/>
</dbReference>
<dbReference type="SMART" id="SM01381">
    <property type="entry name" value="7TM_GPCR_Srsx"/>
    <property type="match status" value="1"/>
</dbReference>
<dbReference type="SUPFAM" id="SSF81321">
    <property type="entry name" value="Family A G protein-coupled receptor-like"/>
    <property type="match status" value="1"/>
</dbReference>
<dbReference type="PROSITE" id="PS00237">
    <property type="entry name" value="G_PROTEIN_RECEP_F1_1"/>
    <property type="match status" value="1"/>
</dbReference>
<dbReference type="PROSITE" id="PS50262">
    <property type="entry name" value="G_PROTEIN_RECEP_F1_2"/>
    <property type="match status" value="1"/>
</dbReference>
<sequence length="317" mass="34722">MSVQGPQRRLLGSLNSTSPAAPRLGLAANQTGPRCLEVSVPDGLFLSLGLVSVVENVLVVAAIAKNRNLHSPMYYFICCLAVSDLLVSVSSVLETAVMLLLEAGTLAGRAAVVQQLDDVIDVLVCGAMVSSLCFLGAIAVDRYISIFYALRYHSIVTLPRAWRAISAIWVASVLSSTLFIAYYDHTAVLLCLVSFFVAMLVLMAVLYVHMLARACQHARGIARLHKRQRPVHQGLGLKGAATLTILLGIFFLCWGPFFLHLSLMVLCPRHPICGCVFKNFNLFLTLIICNSIVDPLIYAFRSQELRKTLQEVLLCSW</sequence>
<evidence type="ECO:0000250" key="1">
    <source>
        <dbReference type="UniProtKB" id="Q01726"/>
    </source>
</evidence>
<evidence type="ECO:0000255" key="2"/>
<evidence type="ECO:0000255" key="3">
    <source>
        <dbReference type="PROSITE-ProRule" id="PRU00521"/>
    </source>
</evidence>
<evidence type="ECO:0000269" key="4">
    <source>
    </source>
</evidence>
<protein>
    <recommendedName>
        <fullName>Melanocyte-stimulating hormone receptor</fullName>
        <shortName>MSH-R</shortName>
    </recommendedName>
    <alternativeName>
        <fullName>Melanocortin receptor 1</fullName>
        <shortName>MC1-R</shortName>
    </alternativeName>
</protein>